<protein>
    <recommendedName>
        <fullName>Protein YobF</fullName>
    </recommendedName>
</protein>
<comment type="similarity">
    <text evidence="1">Belongs to the YobF/DUF2527 family.</text>
</comment>
<reference key="1">
    <citation type="journal article" date="2002" name="Nucleic Acids Res.">
        <title>Genome sequence of Shigella flexneri 2a: insights into pathogenicity through comparison with genomes of Escherichia coli K12 and O157.</title>
        <authorList>
            <person name="Jin Q."/>
            <person name="Yuan Z."/>
            <person name="Xu J."/>
            <person name="Wang Y."/>
            <person name="Shen Y."/>
            <person name="Lu W."/>
            <person name="Wang J."/>
            <person name="Liu H."/>
            <person name="Yang J."/>
            <person name="Yang F."/>
            <person name="Zhang X."/>
            <person name="Zhang J."/>
            <person name="Yang G."/>
            <person name="Wu H."/>
            <person name="Qu D."/>
            <person name="Dong J."/>
            <person name="Sun L."/>
            <person name="Xue Y."/>
            <person name="Zhao A."/>
            <person name="Gao Y."/>
            <person name="Zhu J."/>
            <person name="Kan B."/>
            <person name="Ding K."/>
            <person name="Chen S."/>
            <person name="Cheng H."/>
            <person name="Yao Z."/>
            <person name="He B."/>
            <person name="Chen R."/>
            <person name="Ma D."/>
            <person name="Qiang B."/>
            <person name="Wen Y."/>
            <person name="Hou Y."/>
            <person name="Yu J."/>
        </authorList>
    </citation>
    <scope>NUCLEOTIDE SEQUENCE [LARGE SCALE GENOMIC DNA]</scope>
    <source>
        <strain>301 / Serotype 2a</strain>
    </source>
</reference>
<reference key="2">
    <citation type="journal article" date="2003" name="Infect. Immun.">
        <title>Complete genome sequence and comparative genomics of Shigella flexneri serotype 2a strain 2457T.</title>
        <authorList>
            <person name="Wei J."/>
            <person name="Goldberg M.B."/>
            <person name="Burland V."/>
            <person name="Venkatesan M.M."/>
            <person name="Deng W."/>
            <person name="Fournier G."/>
            <person name="Mayhew G.F."/>
            <person name="Plunkett G. III"/>
            <person name="Rose D.J."/>
            <person name="Darling A."/>
            <person name="Mau B."/>
            <person name="Perna N.T."/>
            <person name="Payne S.M."/>
            <person name="Runyen-Janecky L.J."/>
            <person name="Zhou S."/>
            <person name="Schwartz D.C."/>
            <person name="Blattner F.R."/>
        </authorList>
    </citation>
    <scope>NUCLEOTIDE SEQUENCE [LARGE SCALE GENOMIC DNA]</scope>
    <source>
        <strain>ATCC 700930 / 2457T / Serotype 2a</strain>
    </source>
</reference>
<name>YOBF_SHIFL</name>
<sequence>MCGIFSKEVLSKHVDVEYRFSAEPYIGASCSNVSVLSMLCLRAKKTI</sequence>
<keyword id="KW-1185">Reference proteome</keyword>
<organism>
    <name type="scientific">Shigella flexneri</name>
    <dbReference type="NCBI Taxonomy" id="623"/>
    <lineage>
        <taxon>Bacteria</taxon>
        <taxon>Pseudomonadati</taxon>
        <taxon>Pseudomonadota</taxon>
        <taxon>Gammaproteobacteria</taxon>
        <taxon>Enterobacterales</taxon>
        <taxon>Enterobacteriaceae</taxon>
        <taxon>Shigella</taxon>
    </lineage>
</organism>
<accession>P64511</accession>
<accession>P76265</accession>
<feature type="chain" id="PRO_0000169065" description="Protein YobF">
    <location>
        <begin position="1"/>
        <end position="47"/>
    </location>
</feature>
<evidence type="ECO:0000305" key="1"/>
<proteinExistence type="inferred from homology"/>
<gene>
    <name type="primary">yobF</name>
    <name type="ordered locus">SF1402</name>
    <name type="ordered locus">S1517</name>
</gene>
<dbReference type="EMBL" id="AE005674">
    <property type="protein sequence ID" value="AAN43003.1"/>
    <property type="molecule type" value="Genomic_DNA"/>
</dbReference>
<dbReference type="EMBL" id="AE014073">
    <property type="protein sequence ID" value="AAP16898.1"/>
    <property type="molecule type" value="Genomic_DNA"/>
</dbReference>
<dbReference type="RefSeq" id="NP_707296.1">
    <property type="nucleotide sequence ID" value="NC_004337.2"/>
</dbReference>
<dbReference type="RefSeq" id="WP_001295496.1">
    <property type="nucleotide sequence ID" value="NZ_WPGW01000080.1"/>
</dbReference>
<dbReference type="STRING" id="198214.SF1402"/>
<dbReference type="PaxDb" id="198214-SF1402"/>
<dbReference type="GeneID" id="1027798"/>
<dbReference type="KEGG" id="sfl:SF1402"/>
<dbReference type="KEGG" id="sfx:S1517"/>
<dbReference type="PATRIC" id="fig|198214.7.peg.1652"/>
<dbReference type="HOGENOM" id="CLU_216752_0_0_6"/>
<dbReference type="Proteomes" id="UP000001006">
    <property type="component" value="Chromosome"/>
</dbReference>
<dbReference type="Proteomes" id="UP000002673">
    <property type="component" value="Chromosome"/>
</dbReference>
<dbReference type="InterPro" id="IPR019672">
    <property type="entry name" value="DUF2527"/>
</dbReference>
<dbReference type="Pfam" id="PF10736">
    <property type="entry name" value="DUF2527"/>
    <property type="match status" value="1"/>
</dbReference>